<accession>Q3V4Z0</accession>
<accession>Q3V4X3</accession>
<name>YCF2_ACOCL</name>
<geneLocation type="chloroplast"/>
<proteinExistence type="inferred from homology"/>
<dbReference type="EMBL" id="AJ879453">
    <property type="protein sequence ID" value="CAI53838.1"/>
    <property type="molecule type" value="Genomic_DNA"/>
</dbReference>
<dbReference type="EMBL" id="AJ879453">
    <property type="protein sequence ID" value="CAI53855.1"/>
    <property type="status" value="ALT_INIT"/>
    <property type="molecule type" value="Genomic_DNA"/>
</dbReference>
<dbReference type="GO" id="GO:0009570">
    <property type="term" value="C:chloroplast stroma"/>
    <property type="evidence" value="ECO:0007669"/>
    <property type="project" value="UniProtKB-SubCell"/>
</dbReference>
<dbReference type="GO" id="GO:0005524">
    <property type="term" value="F:ATP binding"/>
    <property type="evidence" value="ECO:0007669"/>
    <property type="project" value="UniProtKB-KW"/>
</dbReference>
<dbReference type="GO" id="GO:0016887">
    <property type="term" value="F:ATP hydrolysis activity"/>
    <property type="evidence" value="ECO:0007669"/>
    <property type="project" value="InterPro"/>
</dbReference>
<dbReference type="Gene3D" id="3.40.50.300">
    <property type="entry name" value="P-loop containing nucleotide triphosphate hydrolases"/>
    <property type="match status" value="1"/>
</dbReference>
<dbReference type="HAMAP" id="MF_01330">
    <property type="entry name" value="Ycf2"/>
    <property type="match status" value="1"/>
</dbReference>
<dbReference type="InterPro" id="IPR003959">
    <property type="entry name" value="ATPase_AAA_core"/>
</dbReference>
<dbReference type="InterPro" id="IPR027417">
    <property type="entry name" value="P-loop_NTPase"/>
</dbReference>
<dbReference type="InterPro" id="IPR008543">
    <property type="entry name" value="Uncharacterised_Ycf2"/>
</dbReference>
<dbReference type="InterPro" id="IPR056777">
    <property type="entry name" value="Ycf2_N"/>
</dbReference>
<dbReference type="PANTHER" id="PTHR33078:SF95">
    <property type="entry name" value="ATPASE AAA-TYPE CORE DOMAIN-CONTAINING PROTEIN"/>
    <property type="match status" value="1"/>
</dbReference>
<dbReference type="PANTHER" id="PTHR33078">
    <property type="entry name" value="PROTEIN YCF2-RELATED"/>
    <property type="match status" value="1"/>
</dbReference>
<dbReference type="Pfam" id="PF00004">
    <property type="entry name" value="AAA"/>
    <property type="match status" value="1"/>
</dbReference>
<dbReference type="Pfam" id="PF05695">
    <property type="entry name" value="Ycf2"/>
    <property type="match status" value="2"/>
</dbReference>
<dbReference type="SUPFAM" id="SSF52540">
    <property type="entry name" value="P-loop containing nucleoside triphosphate hydrolases"/>
    <property type="match status" value="1"/>
</dbReference>
<comment type="function">
    <text>Probable ATPase of unknown function. Its presence in a non-photosynthetic plant (Epifagus virginiana) and experiments in tobacco indicate that it has an essential function which is probably not related to photosynthesis.</text>
</comment>
<comment type="subcellular location">
    <subcellularLocation>
        <location evidence="1">Plastid</location>
        <location evidence="1">Chloroplast stroma</location>
    </subcellularLocation>
</comment>
<comment type="similarity">
    <text evidence="1">Belongs to the Ycf2 family.</text>
</comment>
<comment type="sequence caution" evidence="2">
    <conflict type="erroneous initiation">
        <sequence resource="EMBL-CDS" id="CAI53855"/>
    </conflict>
    <text>Extended N-terminus.</text>
</comment>
<feature type="chain" id="PRO_0000242528" description="Protein Ycf2">
    <location>
        <begin position="1"/>
        <end position="2076"/>
    </location>
</feature>
<feature type="binding site" evidence="1">
    <location>
        <begin position="1458"/>
        <end position="1465"/>
    </location>
    <ligand>
        <name>ATP</name>
        <dbReference type="ChEBI" id="CHEBI:30616"/>
    </ligand>
</feature>
<protein>
    <recommendedName>
        <fullName evidence="1">Protein Ycf2</fullName>
    </recommendedName>
</protein>
<organism>
    <name type="scientific">Acorus calamus</name>
    <name type="common">Sweet flag</name>
    <dbReference type="NCBI Taxonomy" id="4465"/>
    <lineage>
        <taxon>Eukaryota</taxon>
        <taxon>Viridiplantae</taxon>
        <taxon>Streptophyta</taxon>
        <taxon>Embryophyta</taxon>
        <taxon>Tracheophyta</taxon>
        <taxon>Spermatophyta</taxon>
        <taxon>Magnoliopsida</taxon>
        <taxon>Liliopsida</taxon>
        <taxon>Acoraceae</taxon>
        <taxon>Acorus</taxon>
    </lineage>
</organism>
<reference key="1">
    <citation type="journal article" date="2005" name="Mol. Biol. Evol.">
        <title>Analysis of Acorus calamus chloroplast genome and its phylogenetic implications.</title>
        <authorList>
            <person name="Goremykin V.V."/>
            <person name="Holland B."/>
            <person name="Hirsch-Ernst K.I."/>
            <person name="Hellwig F.H."/>
        </authorList>
    </citation>
    <scope>NUCLEOTIDE SEQUENCE [LARGE SCALE GENOMIC DNA]</scope>
</reference>
<evidence type="ECO:0000255" key="1">
    <source>
        <dbReference type="HAMAP-Rule" id="MF_01330"/>
    </source>
</evidence>
<evidence type="ECO:0000305" key="2"/>
<gene>
    <name evidence="1" type="primary">ycf2-A</name>
</gene>
<gene>
    <name evidence="1" type="primary">ycf2-B</name>
</gene>
<sequence length="2076" mass="243055">MKRHQFRFWIFELREILREIKNSPHFLDSWTKFDSVRSLIHIFFHQERLMKLFDPRIWSILLSRDSQGSTSNRYFIIKGLVLLVVAVLISRINNRNMVERKNLYLRGLLPIPMNSIGPGNETLEESFWSSDINRLIVLLLYLPKGKKTSESCFMDPKESLWLFPINKINQKCIMPESNRGSRWWRNRIGKKRDSSCKISTKTVAGIEISSKEKDLKYLEFLFLSYTDDPIRKDRFFSKVQNVSSNIQYDSTRSIFVQVTDFSQSKGSSDQSRDHFDSISKEDSEYHTLIDQTEIPQLKGRSIPGDPSFLQTERTEIESDRFPKCLSGSSPMSPLFPEHEKQMIIHRLPEEIDEFLGNPTRSIRSFFSDRWSELHMGSNPTDRSTRDQKWLKKQQDVSFVSSRRSENKEMVDIFKIITYLQNTVSIHPISSDPGCDMVPKDEPDMDSSNKISFLNKNPFFDLFHLFHDRNKGGYTLHHDFESEERFQEMADLFTLSITEPDLVYHRGFAFSIDSCGLDQKKLVNGKEKTKDESKKKSLLVLPPLFYEENAFFYRSIRKKPVWIHCGNDLFASNNIMEAVNQYRLIRNLIQIQYSAYGYIRNVLNRFFLMNRSDRNFEYGIQRDQIGNDTLNHITIMKYTINQHLSNLKKSQKKWFDPLISRTERSMNRDPNAYRYKWSNGSKNFQEHLEHFVSEQKNRFQVVFDQLRINQYSINWSEAIDKQDLSKSLRFFLSKSLLFLSKPLRFFLSKSLPLFFVSIGNSPIHRSEIHIYELKGPNEPLCNQLLKSIGVQIIHLHKLKPDHDTSQRSKFLINGGTISPFLFNKIPKWMIDSFHTRKNRSKSFANTDSYFSMISHDRDNWLNPVKPFHRSSLISSFYKANQLRFLNNPHHFWFYCNKRFPFYVEKTRINNYDRTYGQFLNILFIRNKIFSLCVGKKKHLLPIYSQVSDIFIPNDFPQSGDETYNLYKSFRFPIRPDPFVRRALYSIADISGTPLTEEQIVNFERTYCQPLSDMNLSDSEGKNLHQYLSFNSNIGLIHTPCSEKNLPYVKRKKQSLYLRKKRSLYLKKCVEKGQMYRTSQQRDSAFSKWNLFQTYMPWFLTSTGCKYLTSVLLDIFSDRLSILSSSPKLVSILNSIMHRSDISRLIKKWWTILPQWNLISEISSKCLQNLLLSEEMIHRNNESPVSMILTHLRSTNAREFLYSILFLLLVAGYLVRTHLLFVSRVSNELQTELEKIKSLMIPSYMIELQKLLYRYPTSTSKSESESESEYEYELNSFLLNNLFALEQLDWNIDLISIISNTITFSRNTRHLSRTSKEIYSLIRERKNVNSDWIEDRVESWVTINDLIDEDERDLAVQFSTLTTEKRIDQILWSLTHSHPVSKNDLDYQIIEQPGLISLRYLVDIHKKDLMNYEFNGSCLAEKRIFLANYRTITYSQTPSRGKPFSLRLDLSPSRGILVIGSIGTGRSHLVKYLATNSYVPFITVFPDRGLSDRPIYCFMDEDTDPDEDYDYIDDDIDIDSDNFDTELETIADVVTMDNMLLKVIRFDILGQFELAKTMSPCIIWIPNIHDLYLNESNYLSLGLLTNFLSSLYGDCETTRNILVFASTHLPQLVDPVLIDPKKFNTCIKIRRLLSPQQRKHFFNLLYTRGFHSENKMFHANGFGSITMGSNARDLVALTNEVLSISITQKKSILETNTIRLALHRQTWDLRSHVRSVPDHGILFYQIGRAVAQNVLLSNCCTDPISIYMKKKSCNEGFSYLYKWYYELGTSMKKLTILLYLLSCSAGSVAQDLWSPPGPDENSWITSDRFVENDSDLVDSLLEIEGALVGSWLLRSEPRNPLDMMQKRSCSIFKKDESEFAEGEGALALDPQEMLFYNQIVWAPRLWRPPCGKLFDCIEYSQEDDDDWEFWQSGTKYYWMRDSEGGQGFWVSQLKKFLWNPEAADPFLFLFKDQPFVSDSDFSSYHQPFSNFLVELMPPFKASSVSLYKGWVNKKLQEMCLEYLSDRERWLRTNSSLSHGSFRSNTLSESYQYLANLFLSNATLLDQMTKTLLRKRWLFPDEMKDLIHGTGGGTELTGR</sequence>
<keyword id="KW-0067">ATP-binding</keyword>
<keyword id="KW-0150">Chloroplast</keyword>
<keyword id="KW-0547">Nucleotide-binding</keyword>
<keyword id="KW-0934">Plastid</keyword>